<feature type="chain" id="PRO_1000134163" description="ATP synthase gamma chain">
    <location>
        <begin position="1"/>
        <end position="292"/>
    </location>
</feature>
<comment type="function">
    <text evidence="1">Produces ATP from ADP in the presence of a proton gradient across the membrane. The gamma chain is believed to be important in regulating ATPase activity and the flow of protons through the CF(0) complex.</text>
</comment>
<comment type="subunit">
    <text evidence="1">F-type ATPases have 2 components, CF(1) - the catalytic core - and CF(0) - the membrane proton channel. CF(1) has five subunits: alpha(3), beta(3), gamma(1), delta(1), epsilon(1). CF(0) has three main subunits: a, b and c.</text>
</comment>
<comment type="subcellular location">
    <subcellularLocation>
        <location evidence="1">Cell inner membrane</location>
        <topology evidence="1">Peripheral membrane protein</topology>
    </subcellularLocation>
</comment>
<comment type="similarity">
    <text evidence="1">Belongs to the ATPase gamma chain family.</text>
</comment>
<protein>
    <recommendedName>
        <fullName evidence="1">ATP synthase gamma chain</fullName>
    </recommendedName>
    <alternativeName>
        <fullName evidence="1">ATP synthase F1 sector gamma subunit</fullName>
    </alternativeName>
    <alternativeName>
        <fullName evidence="1">F-ATPase gamma subunit</fullName>
    </alternativeName>
</protein>
<evidence type="ECO:0000255" key="1">
    <source>
        <dbReference type="HAMAP-Rule" id="MF_00815"/>
    </source>
</evidence>
<proteinExistence type="inferred from homology"/>
<gene>
    <name evidence="1" type="primary">atpG</name>
    <name type="ordered locus">HY04AAS1_1557</name>
</gene>
<name>ATPG_HYDS0</name>
<dbReference type="EMBL" id="CP001130">
    <property type="protein sequence ID" value="ACG58239.1"/>
    <property type="molecule type" value="Genomic_DNA"/>
</dbReference>
<dbReference type="RefSeq" id="WP_012514595.1">
    <property type="nucleotide sequence ID" value="NC_011126.1"/>
</dbReference>
<dbReference type="SMR" id="B4U6A3"/>
<dbReference type="STRING" id="380749.HY04AAS1_1557"/>
<dbReference type="KEGG" id="hya:HY04AAS1_1557"/>
<dbReference type="eggNOG" id="COG0224">
    <property type="taxonomic scope" value="Bacteria"/>
</dbReference>
<dbReference type="HOGENOM" id="CLU_050669_0_1_0"/>
<dbReference type="OrthoDB" id="9812769at2"/>
<dbReference type="GO" id="GO:0005886">
    <property type="term" value="C:plasma membrane"/>
    <property type="evidence" value="ECO:0007669"/>
    <property type="project" value="UniProtKB-SubCell"/>
</dbReference>
<dbReference type="GO" id="GO:0045259">
    <property type="term" value="C:proton-transporting ATP synthase complex"/>
    <property type="evidence" value="ECO:0007669"/>
    <property type="project" value="UniProtKB-KW"/>
</dbReference>
<dbReference type="GO" id="GO:0005524">
    <property type="term" value="F:ATP binding"/>
    <property type="evidence" value="ECO:0007669"/>
    <property type="project" value="UniProtKB-UniRule"/>
</dbReference>
<dbReference type="GO" id="GO:0046933">
    <property type="term" value="F:proton-transporting ATP synthase activity, rotational mechanism"/>
    <property type="evidence" value="ECO:0007669"/>
    <property type="project" value="UniProtKB-UniRule"/>
</dbReference>
<dbReference type="GO" id="GO:0042777">
    <property type="term" value="P:proton motive force-driven plasma membrane ATP synthesis"/>
    <property type="evidence" value="ECO:0007669"/>
    <property type="project" value="UniProtKB-UniRule"/>
</dbReference>
<dbReference type="CDD" id="cd12151">
    <property type="entry name" value="F1-ATPase_gamma"/>
    <property type="match status" value="1"/>
</dbReference>
<dbReference type="Gene3D" id="3.40.1380.10">
    <property type="match status" value="1"/>
</dbReference>
<dbReference type="Gene3D" id="1.10.287.80">
    <property type="entry name" value="ATP synthase, gamma subunit, helix hairpin domain"/>
    <property type="match status" value="1"/>
</dbReference>
<dbReference type="HAMAP" id="MF_00815">
    <property type="entry name" value="ATP_synth_gamma_bact"/>
    <property type="match status" value="1"/>
</dbReference>
<dbReference type="InterPro" id="IPR035968">
    <property type="entry name" value="ATP_synth_F1_ATPase_gsu"/>
</dbReference>
<dbReference type="InterPro" id="IPR000131">
    <property type="entry name" value="ATP_synth_F1_gsu"/>
</dbReference>
<dbReference type="NCBIfam" id="TIGR01146">
    <property type="entry name" value="ATPsyn_F1gamma"/>
    <property type="match status" value="1"/>
</dbReference>
<dbReference type="NCBIfam" id="NF010708">
    <property type="entry name" value="PRK14110.1"/>
    <property type="match status" value="1"/>
</dbReference>
<dbReference type="PANTHER" id="PTHR11693">
    <property type="entry name" value="ATP SYNTHASE GAMMA CHAIN"/>
    <property type="match status" value="1"/>
</dbReference>
<dbReference type="PANTHER" id="PTHR11693:SF22">
    <property type="entry name" value="ATP SYNTHASE SUBUNIT GAMMA, MITOCHONDRIAL"/>
    <property type="match status" value="1"/>
</dbReference>
<dbReference type="Pfam" id="PF00231">
    <property type="entry name" value="ATP-synt"/>
    <property type="match status" value="1"/>
</dbReference>
<dbReference type="PRINTS" id="PR00126">
    <property type="entry name" value="ATPASEGAMMA"/>
</dbReference>
<dbReference type="SUPFAM" id="SSF52943">
    <property type="entry name" value="ATP synthase (F1-ATPase), gamma subunit"/>
    <property type="match status" value="1"/>
</dbReference>
<keyword id="KW-0066">ATP synthesis</keyword>
<keyword id="KW-0997">Cell inner membrane</keyword>
<keyword id="KW-1003">Cell membrane</keyword>
<keyword id="KW-0139">CF(1)</keyword>
<keyword id="KW-0375">Hydrogen ion transport</keyword>
<keyword id="KW-0406">Ion transport</keyword>
<keyword id="KW-0472">Membrane</keyword>
<keyword id="KW-0813">Transport</keyword>
<accession>B4U6A3</accession>
<reference key="1">
    <citation type="journal article" date="2009" name="J. Bacteriol.">
        <title>Complete and draft genome sequences of six members of the Aquificales.</title>
        <authorList>
            <person name="Reysenbach A.-L."/>
            <person name="Hamamura N."/>
            <person name="Podar M."/>
            <person name="Griffiths E."/>
            <person name="Ferreira S."/>
            <person name="Hochstein R."/>
            <person name="Heidelberg J."/>
            <person name="Johnson J."/>
            <person name="Mead D."/>
            <person name="Pohorille A."/>
            <person name="Sarmiento M."/>
            <person name="Schweighofer K."/>
            <person name="Seshadri R."/>
            <person name="Voytek M.A."/>
        </authorList>
    </citation>
    <scope>NUCLEOTIDE SEQUENCE [LARGE SCALE GENOMIC DNA]</scope>
    <source>
        <strain>Y04AAS1</strain>
    </source>
</reference>
<organism>
    <name type="scientific">Hydrogenobaculum sp. (strain Y04AAS1)</name>
    <dbReference type="NCBI Taxonomy" id="380749"/>
    <lineage>
        <taxon>Bacteria</taxon>
        <taxon>Pseudomonadati</taxon>
        <taxon>Aquificota</taxon>
        <taxon>Aquificia</taxon>
        <taxon>Aquificales</taxon>
        <taxon>Aquificaceae</taxon>
        <taxon>Hydrogenobaculum</taxon>
    </lineage>
</organism>
<sequence>MPKLSPRDIKSKIAGIKNTMRITNAMKVVSAAKLRKAQEAIFKARPYSDKLYELMAHLFAHIDTYSHPLFKRRELKNVDLVIISADRGLAGAFNTNLFKKVDSYLKSCPSQRINLHIVGKKANQYYSKRSYHIVSSYQDVFKKEINFDIVKELGAKLISRYKEEETDHIVLFNNEMITKATYAPKERRFLPITYEDVHIQEPKLDHNTIYNIEGNETDILDGIISIYMNYQLYRAMLESNAAEHFARMVAMDNATRNASDLIKKWTLIFNKARQESITAELIDIVTAAEAMD</sequence>